<organism>
    <name type="scientific">Canine adenovirus serotype 1 (strain CLL)</name>
    <name type="common">CAdV-1</name>
    <name type="synonym">Canine adenovirus 1 (strain CLL)</name>
    <dbReference type="NCBI Taxonomy" id="69150"/>
    <lineage>
        <taxon>Viruses</taxon>
        <taxon>Varidnaviria</taxon>
        <taxon>Bamfordvirae</taxon>
        <taxon>Preplasmiviricota</taxon>
        <taxon>Tectiliviricetes</taxon>
        <taxon>Rowavirales</taxon>
        <taxon>Adenoviridae</taxon>
        <taxon>Mastadenovirus</taxon>
        <taxon>Canine mastadenovirus A</taxon>
    </lineage>
</organism>
<keyword id="KW-0010">Activator</keyword>
<keyword id="KW-0244">Early protein</keyword>
<keyword id="KW-1078">G1/S host cell cycle checkpoint dysregulation by virus</keyword>
<keyword id="KW-1048">Host nucleus</keyword>
<keyword id="KW-0945">Host-virus interaction</keyword>
<keyword id="KW-1090">Inhibition of host innate immune response by virus</keyword>
<keyword id="KW-1114">Inhibition of host interferon signaling pathway by virus</keyword>
<keyword id="KW-1105">Inhibition of host STAT1 by virus</keyword>
<keyword id="KW-0922">Interferon antiviral system evasion</keyword>
<keyword id="KW-0479">Metal-binding</keyword>
<keyword id="KW-1121">Modulation of host cell cycle by virus</keyword>
<keyword id="KW-0804">Transcription</keyword>
<keyword id="KW-0805">Transcription regulation</keyword>
<keyword id="KW-0899">Viral immunoevasion</keyword>
<keyword id="KW-0862">Zinc</keyword>
<keyword id="KW-0863">Zinc-finger</keyword>
<name>E1A_ADECC</name>
<evidence type="ECO:0000250" key="1"/>
<evidence type="ECO:0000250" key="2">
    <source>
        <dbReference type="UniProtKB" id="P03254"/>
    </source>
</evidence>
<evidence type="ECO:0000250" key="3">
    <source>
        <dbReference type="UniProtKB" id="P03255"/>
    </source>
</evidence>
<evidence type="ECO:0000255" key="4"/>
<evidence type="ECO:0000256" key="5">
    <source>
        <dbReference type="SAM" id="MobiDB-lite"/>
    </source>
</evidence>
<evidence type="ECO:0000305" key="6"/>
<accession>Q65941</accession>
<feature type="chain" id="PRO_0000221699" description="Early E1A protein">
    <location>
        <begin position="1"/>
        <end position="230"/>
    </location>
</feature>
<feature type="zinc finger region" evidence="2">
    <location>
        <begin position="145"/>
        <end position="163"/>
    </location>
</feature>
<feature type="region of interest" description="Interaction with RB1 in competition with E2F1" evidence="1">
    <location>
        <begin position="40"/>
        <end position="48"/>
    </location>
</feature>
<feature type="region of interest" description="Disordered" evidence="5">
    <location>
        <begin position="189"/>
        <end position="230"/>
    </location>
</feature>
<feature type="short sequence motif" description="LXCXE motif, interaction with host RB1" evidence="4">
    <location>
        <begin position="106"/>
        <end position="110"/>
    </location>
</feature>
<feature type="short sequence motif" description="PXDLS motif, CTBP-binding" evidence="1">
    <location>
        <begin position="220"/>
        <end position="224"/>
    </location>
</feature>
<feature type="short sequence motif" description="Nuclear localization signal" evidence="4">
    <location>
        <begin position="226"/>
        <end position="230"/>
    </location>
</feature>
<organismHost>
    <name type="scientific">Canis lupus familiaris</name>
    <name type="common">Dog</name>
    <name type="synonym">Canis familiaris</name>
    <dbReference type="NCBI Taxonomy" id="9615"/>
</organismHost>
<comment type="function">
    <text evidence="3">Plays a role in viral genome replication by driving entry of quiescent cells into the cell cycle. Stimulation of progression from G1 to S phase allows the virus to efficiently use the cellular DNA replicating machinery to achieve viral genome replication. E1A protein has both transforming and trans-activating activities. Induces the disassembly of the E2F1 transcription factor from RB1 by direct competition for the same binding site on RB1, with subsequent transcriptional activation of E2F1-regulated S-phase genes and of the E2 region of the adenoviral genome. Release of E2F1 leads to the ARF-mediated inhibition of MDM2 and causes TP53/p53 to accumulate because it is not targeted for degradation by MDM2-mediated ubiquitination anymore. This increase in TP53, in turn, would arrest the cell proliferation and direct its death but this effect is counteracted by the viral protein E1B-55K. Inactivation of the ability of RB1 to arrest the cell cycle is critical for cellular transformation, uncontrolled cellular growth and proliferation induced by viral infection. Interaction with RBX1 and CUL1 inhibits ubiquitination of the proteins targeted by SCF(FBXW7) ubiquitin ligase complex, and may be linked to unregulated host cell proliferation. The tumorigenesis-restraining activity of E1A may be related to the disruption of the host CtBP-CtIP complex through the CtBP binding motif.</text>
</comment>
<comment type="subunit">
    <text evidence="2 3">Interacts with host UBE2I; this interaction interferes with polySUMOylation. Interacts with host RB1; this interaction induces the aberrant dissociation of RB1-E2F1 complex thereby disrupting the activity of RB1 and activating E2F1-regulated genes. Interacts with host ATF7; the interaction enhances ATF7-mediated viral transactivation activity which requires the zinc binding domains of both proteins. Isoform early E1A 32 kDa protein and isoform early E1A 26 kDa protein interact (via N-terminus) with CUL1 and E3 ubiquitin ligase RBX1; these interactions inhibit RBX1-CUL1-dependent elongation reaction of ubiquitin chains and attenuate ubiquitination of SCF(FBXW7) target proteins. Interacts (via PXLXP motif) with host ZMYND11/BS69 (via MYND-type zinc finger); this interaction inhibits E1A mediated transactivation. Interacts with host EP300; this interaction stimulates the acetylation of RB1 by recruiting EP300 and RB1 into a multimeric-protein complex. Interacts with host CTBP1 and CTBP2; this interaction seems to potentiate viral replication. Interacts with host DCAF7. Interacts with host DYRK1A. Interacts with host KPNA4; this interaction allows E1A import into the host nucleus. Interacts with host EP400; this interaction stabilizes MYC. Interacts with host TBP protein; this interaction probably disrupts the TBP-TATA complex.</text>
</comment>
<comment type="subcellular location">
    <subcellularLocation>
        <location evidence="3">Host nucleus</location>
    </subcellularLocation>
</comment>
<comment type="similarity">
    <text evidence="6">Belongs to the adenoviridae E1A protein family.</text>
</comment>
<sequence>MKLTLEPAPRCLHEYVSQLLEDWQPECLSCEYSHGGSSPPSLHDLFDLELENSRSPSPLLCDWCAEADSESTISTETDVGFTLNTPPVSPLPSYSTSPASIPEDMLLCLEEMPTFDDGDEVRSATTSFEHWENNFDPNVGSFFGCLRCAYYQEQGENSICGLCYLKALAEEPVDADAGEDDEVIFVSAKPGSRKRSAVTSRGSVESSKRPCLPEPEQTEPLDLSLKPRPQ</sequence>
<protein>
    <recommendedName>
        <fullName>Early E1A protein</fullName>
    </recommendedName>
    <alternativeName>
        <fullName>Early E1A 25 kDa protein</fullName>
    </alternativeName>
</protein>
<reference key="1">
    <citation type="submission" date="1996-08" db="EMBL/GenBank/DDBJ databases">
        <title>DNA sequence and genomic organization of canine adenovirus type 1.</title>
        <authorList>
            <person name="Campbell J.B."/>
            <person name="Zhao Y."/>
        </authorList>
    </citation>
    <scope>NUCLEOTIDE SEQUENCE [LARGE SCALE GENOMIC DNA]</scope>
</reference>
<dbReference type="EMBL" id="U55001">
    <property type="protein sequence ID" value="AAB05429.1"/>
    <property type="molecule type" value="Genomic_DNA"/>
</dbReference>
<dbReference type="GO" id="GO:0042025">
    <property type="term" value="C:host cell nucleus"/>
    <property type="evidence" value="ECO:0007669"/>
    <property type="project" value="UniProtKB-SubCell"/>
</dbReference>
<dbReference type="GO" id="GO:0008270">
    <property type="term" value="F:zinc ion binding"/>
    <property type="evidence" value="ECO:0007669"/>
    <property type="project" value="UniProtKB-KW"/>
</dbReference>
<dbReference type="GO" id="GO:0006355">
    <property type="term" value="P:regulation of DNA-templated transcription"/>
    <property type="evidence" value="ECO:0007669"/>
    <property type="project" value="InterPro"/>
</dbReference>
<dbReference type="GO" id="GO:0039645">
    <property type="term" value="P:symbiont-mediated perturbation of host cell cycle G1/S transition checkpoint"/>
    <property type="evidence" value="ECO:0007669"/>
    <property type="project" value="UniProtKB-KW"/>
</dbReference>
<dbReference type="GO" id="GO:0052170">
    <property type="term" value="P:symbiont-mediated suppression of host innate immune response"/>
    <property type="evidence" value="ECO:0007669"/>
    <property type="project" value="UniProtKB-KW"/>
</dbReference>
<dbReference type="GO" id="GO:0039563">
    <property type="term" value="P:symbiont-mediated suppression of host JAK-STAT cascade via inhibition of STAT1 activity"/>
    <property type="evidence" value="ECO:0007669"/>
    <property type="project" value="UniProtKB-KW"/>
</dbReference>
<dbReference type="GO" id="GO:0039502">
    <property type="term" value="P:symbiont-mediated suppression of host type I interferon-mediated signaling pathway"/>
    <property type="evidence" value="ECO:0007669"/>
    <property type="project" value="UniProtKB-KW"/>
</dbReference>
<dbReference type="InterPro" id="IPR014410">
    <property type="entry name" value="Aden_E1A"/>
</dbReference>
<dbReference type="PIRSF" id="PIRSF003669">
    <property type="entry name" value="Aden_E1A"/>
    <property type="match status" value="1"/>
</dbReference>
<proteinExistence type="inferred from homology"/>